<dbReference type="EC" id="6.3.4.19" evidence="1"/>
<dbReference type="EMBL" id="CP000943">
    <property type="protein sequence ID" value="ACA14853.1"/>
    <property type="molecule type" value="Genomic_DNA"/>
</dbReference>
<dbReference type="RefSeq" id="WP_012330271.1">
    <property type="nucleotide sequence ID" value="NC_010511.1"/>
</dbReference>
<dbReference type="SMR" id="B0UGN1"/>
<dbReference type="STRING" id="426117.M446_0282"/>
<dbReference type="KEGG" id="met:M446_0282"/>
<dbReference type="eggNOG" id="COG0037">
    <property type="taxonomic scope" value="Bacteria"/>
</dbReference>
<dbReference type="HOGENOM" id="CLU_018869_3_2_5"/>
<dbReference type="GO" id="GO:0005737">
    <property type="term" value="C:cytoplasm"/>
    <property type="evidence" value="ECO:0007669"/>
    <property type="project" value="UniProtKB-SubCell"/>
</dbReference>
<dbReference type="GO" id="GO:0005524">
    <property type="term" value="F:ATP binding"/>
    <property type="evidence" value="ECO:0007669"/>
    <property type="project" value="UniProtKB-UniRule"/>
</dbReference>
<dbReference type="GO" id="GO:0032267">
    <property type="term" value="F:tRNA(Ile)-lysidine synthase activity"/>
    <property type="evidence" value="ECO:0007669"/>
    <property type="project" value="UniProtKB-EC"/>
</dbReference>
<dbReference type="GO" id="GO:0006400">
    <property type="term" value="P:tRNA modification"/>
    <property type="evidence" value="ECO:0007669"/>
    <property type="project" value="UniProtKB-UniRule"/>
</dbReference>
<dbReference type="CDD" id="cd01992">
    <property type="entry name" value="TilS_N"/>
    <property type="match status" value="1"/>
</dbReference>
<dbReference type="Gene3D" id="3.40.50.620">
    <property type="entry name" value="HUPs"/>
    <property type="match status" value="1"/>
</dbReference>
<dbReference type="HAMAP" id="MF_01161">
    <property type="entry name" value="tRNA_Ile_lys_synt"/>
    <property type="match status" value="1"/>
</dbReference>
<dbReference type="InterPro" id="IPR014729">
    <property type="entry name" value="Rossmann-like_a/b/a_fold"/>
</dbReference>
<dbReference type="InterPro" id="IPR011063">
    <property type="entry name" value="TilS/TtcA_N"/>
</dbReference>
<dbReference type="InterPro" id="IPR012094">
    <property type="entry name" value="tRNA_Ile_lys_synt"/>
</dbReference>
<dbReference type="InterPro" id="IPR012795">
    <property type="entry name" value="tRNA_Ile_lys_synt_N"/>
</dbReference>
<dbReference type="NCBIfam" id="TIGR02432">
    <property type="entry name" value="lysidine_TilS_N"/>
    <property type="match status" value="1"/>
</dbReference>
<dbReference type="PANTHER" id="PTHR43033">
    <property type="entry name" value="TRNA(ILE)-LYSIDINE SYNTHASE-RELATED"/>
    <property type="match status" value="1"/>
</dbReference>
<dbReference type="PANTHER" id="PTHR43033:SF1">
    <property type="entry name" value="TRNA(ILE)-LYSIDINE SYNTHASE-RELATED"/>
    <property type="match status" value="1"/>
</dbReference>
<dbReference type="Pfam" id="PF01171">
    <property type="entry name" value="ATP_bind_3"/>
    <property type="match status" value="1"/>
</dbReference>
<dbReference type="SUPFAM" id="SSF52402">
    <property type="entry name" value="Adenine nucleotide alpha hydrolases-like"/>
    <property type="match status" value="1"/>
</dbReference>
<keyword id="KW-0067">ATP-binding</keyword>
<keyword id="KW-0963">Cytoplasm</keyword>
<keyword id="KW-0436">Ligase</keyword>
<keyword id="KW-0547">Nucleotide-binding</keyword>
<keyword id="KW-0819">tRNA processing</keyword>
<reference key="1">
    <citation type="submission" date="2008-02" db="EMBL/GenBank/DDBJ databases">
        <title>Complete sequence of chromosome of Methylobacterium sp. 4-46.</title>
        <authorList>
            <consortium name="US DOE Joint Genome Institute"/>
            <person name="Copeland A."/>
            <person name="Lucas S."/>
            <person name="Lapidus A."/>
            <person name="Glavina del Rio T."/>
            <person name="Dalin E."/>
            <person name="Tice H."/>
            <person name="Bruce D."/>
            <person name="Goodwin L."/>
            <person name="Pitluck S."/>
            <person name="Chertkov O."/>
            <person name="Brettin T."/>
            <person name="Detter J.C."/>
            <person name="Han C."/>
            <person name="Kuske C.R."/>
            <person name="Schmutz J."/>
            <person name="Larimer F."/>
            <person name="Land M."/>
            <person name="Hauser L."/>
            <person name="Kyrpides N."/>
            <person name="Ivanova N."/>
            <person name="Marx C.J."/>
            <person name="Richardson P."/>
        </authorList>
    </citation>
    <scope>NUCLEOTIDE SEQUENCE [LARGE SCALE GENOMIC DNA]</scope>
    <source>
        <strain>4-46</strain>
    </source>
</reference>
<name>TILS_METS4</name>
<comment type="function">
    <text evidence="1">Ligates lysine onto the cytidine present at position 34 of the AUA codon-specific tRNA(Ile) that contains the anticodon CAU, in an ATP-dependent manner. Cytidine is converted to lysidine, thus changing the amino acid specificity of the tRNA from methionine to isoleucine.</text>
</comment>
<comment type="catalytic activity">
    <reaction evidence="1">
        <text>cytidine(34) in tRNA(Ile2) + L-lysine + ATP = lysidine(34) in tRNA(Ile2) + AMP + diphosphate + H(+)</text>
        <dbReference type="Rhea" id="RHEA:43744"/>
        <dbReference type="Rhea" id="RHEA-COMP:10625"/>
        <dbReference type="Rhea" id="RHEA-COMP:10670"/>
        <dbReference type="ChEBI" id="CHEBI:15378"/>
        <dbReference type="ChEBI" id="CHEBI:30616"/>
        <dbReference type="ChEBI" id="CHEBI:32551"/>
        <dbReference type="ChEBI" id="CHEBI:33019"/>
        <dbReference type="ChEBI" id="CHEBI:82748"/>
        <dbReference type="ChEBI" id="CHEBI:83665"/>
        <dbReference type="ChEBI" id="CHEBI:456215"/>
        <dbReference type="EC" id="6.3.4.19"/>
    </reaction>
</comment>
<comment type="subcellular location">
    <subcellularLocation>
        <location evidence="1">Cytoplasm</location>
    </subcellularLocation>
</comment>
<comment type="domain">
    <text>The N-terminal region contains the highly conserved SGGXDS motif, predicted to be a P-loop motif involved in ATP binding.</text>
</comment>
<comment type="similarity">
    <text evidence="1">Belongs to the tRNA(Ile)-lysidine synthase family.</text>
</comment>
<accession>B0UGN1</accession>
<proteinExistence type="inferred from homology"/>
<gene>
    <name evidence="1" type="primary">tilS</name>
    <name type="ordered locus">M446_0282</name>
</gene>
<feature type="chain" id="PRO_1000137874" description="tRNA(Ile)-lysidine synthase">
    <location>
        <begin position="1"/>
        <end position="344"/>
    </location>
</feature>
<feature type="binding site" evidence="1">
    <location>
        <begin position="35"/>
        <end position="40"/>
    </location>
    <ligand>
        <name>ATP</name>
        <dbReference type="ChEBI" id="CHEBI:30616"/>
    </ligand>
</feature>
<evidence type="ECO:0000255" key="1">
    <source>
        <dbReference type="HAMAP-Rule" id="MF_01161"/>
    </source>
</evidence>
<organism>
    <name type="scientific">Methylobacterium sp. (strain 4-46)</name>
    <dbReference type="NCBI Taxonomy" id="426117"/>
    <lineage>
        <taxon>Bacteria</taxon>
        <taxon>Pseudomonadati</taxon>
        <taxon>Pseudomonadota</taxon>
        <taxon>Alphaproteobacteria</taxon>
        <taxon>Hyphomicrobiales</taxon>
        <taxon>Methylobacteriaceae</taxon>
        <taxon>Methylobacterium</taxon>
    </lineage>
</organism>
<sequence length="344" mass="35175">MSDAARPLDPDEAARRLGPWLGAGGQAGGVVLAVSGGPDSTALMGCAAALPPRVPVLVATVDHGLRPESGEEAAGVAALAGRLGLPHRILTWRGEKPRTRLQEAARAARYDLLLGLAREAGAGAILTAHTLDDQAETVLMRLCAGSGPAGLAGIAPARRLGGLLLGRPFLDLPKARLVATCAAAGWPFAVDPGNAAARFARARLRRVMPLLAAEGLTPARLARLAARLRRNEAALAAAAEAARPSLAAAPAGPGRLALDAAGLAALPEAVALRVLADAIAALRAGERRPERLERLEEALFGRILPAIAAGTPLRLTLGGALLDLAGGRLLLAPEPPRRRTKRAG</sequence>
<protein>
    <recommendedName>
        <fullName evidence="1">tRNA(Ile)-lysidine synthase</fullName>
        <ecNumber evidence="1">6.3.4.19</ecNumber>
    </recommendedName>
    <alternativeName>
        <fullName evidence="1">tRNA(Ile)-2-lysyl-cytidine synthase</fullName>
    </alternativeName>
    <alternativeName>
        <fullName evidence="1">tRNA(Ile)-lysidine synthetase</fullName>
    </alternativeName>
</protein>